<reference key="1">
    <citation type="journal article" date="2002" name="Plant Mol. Biol.">
        <title>Molecular characterization of nucleus-localized RNA-binding proteins from higher plants.</title>
        <authorList>
            <person name="Landsberger M."/>
            <person name="Lorkovic Z.J."/>
            <person name="Oelmuller R."/>
        </authorList>
    </citation>
    <scope>NUCLEOTIDE SEQUENCE [GENOMIC DNA]</scope>
    <scope>TISSUE SPECIFICITY</scope>
    <scope>GENE FAMILY</scope>
    <source>
        <strain>cv. Columbia</strain>
    </source>
</reference>
<reference key="2">
    <citation type="journal article" date="1998" name="Nature">
        <title>Analysis of 1.9 Mb of contiguous sequence from chromosome 4 of Arabidopsis thaliana.</title>
        <authorList>
            <person name="Bevan M."/>
            <person name="Bancroft I."/>
            <person name="Bent E."/>
            <person name="Love K."/>
            <person name="Goodman H.M."/>
            <person name="Dean C."/>
            <person name="Bergkamp R."/>
            <person name="Dirkse W."/>
            <person name="van Staveren M."/>
            <person name="Stiekema W."/>
            <person name="Drost L."/>
            <person name="Ridley P."/>
            <person name="Hudson S.-A."/>
            <person name="Patel K."/>
            <person name="Murphy G."/>
            <person name="Piffanelli P."/>
            <person name="Wedler H."/>
            <person name="Wedler E."/>
            <person name="Wambutt R."/>
            <person name="Weitzenegger T."/>
            <person name="Pohl T."/>
            <person name="Terryn N."/>
            <person name="Gielen J."/>
            <person name="Villarroel R."/>
            <person name="De Clercq R."/>
            <person name="van Montagu M."/>
            <person name="Lecharny A."/>
            <person name="Aubourg S."/>
            <person name="Gy I."/>
            <person name="Kreis M."/>
            <person name="Lao N."/>
            <person name="Kavanagh T."/>
            <person name="Hempel S."/>
            <person name="Kotter P."/>
            <person name="Entian K.-D."/>
            <person name="Rieger M."/>
            <person name="Schaefer M."/>
            <person name="Funk B."/>
            <person name="Mueller-Auer S."/>
            <person name="Silvey M."/>
            <person name="James R."/>
            <person name="Monfort A."/>
            <person name="Pons A."/>
            <person name="Puigdomenech P."/>
            <person name="Douka A."/>
            <person name="Voukelatou E."/>
            <person name="Milioni D."/>
            <person name="Hatzopoulos P."/>
            <person name="Piravandi E."/>
            <person name="Obermaier B."/>
            <person name="Hilbert H."/>
            <person name="Duesterhoeft A."/>
            <person name="Moores T."/>
            <person name="Jones J.D.G."/>
            <person name="Eneva T."/>
            <person name="Palme K."/>
            <person name="Benes V."/>
            <person name="Rechmann S."/>
            <person name="Ansorge W."/>
            <person name="Cooke R."/>
            <person name="Berger C."/>
            <person name="Delseny M."/>
            <person name="Voet M."/>
            <person name="Volckaert G."/>
            <person name="Mewes H.-W."/>
            <person name="Klosterman S."/>
            <person name="Schueller C."/>
            <person name="Chalwatzis N."/>
        </authorList>
    </citation>
    <scope>NUCLEOTIDE SEQUENCE [LARGE SCALE GENOMIC DNA]</scope>
    <source>
        <strain>cv. Columbia</strain>
    </source>
</reference>
<reference key="3">
    <citation type="journal article" date="1999" name="Nature">
        <title>Sequence and analysis of chromosome 4 of the plant Arabidopsis thaliana.</title>
        <authorList>
            <person name="Mayer K.F.X."/>
            <person name="Schueller C."/>
            <person name="Wambutt R."/>
            <person name="Murphy G."/>
            <person name="Volckaert G."/>
            <person name="Pohl T."/>
            <person name="Duesterhoeft A."/>
            <person name="Stiekema W."/>
            <person name="Entian K.-D."/>
            <person name="Terryn N."/>
            <person name="Harris B."/>
            <person name="Ansorge W."/>
            <person name="Brandt P."/>
            <person name="Grivell L.A."/>
            <person name="Rieger M."/>
            <person name="Weichselgartner M."/>
            <person name="de Simone V."/>
            <person name="Obermaier B."/>
            <person name="Mache R."/>
            <person name="Mueller M."/>
            <person name="Kreis M."/>
            <person name="Delseny M."/>
            <person name="Puigdomenech P."/>
            <person name="Watson M."/>
            <person name="Schmidtheini T."/>
            <person name="Reichert B."/>
            <person name="Portetelle D."/>
            <person name="Perez-Alonso M."/>
            <person name="Boutry M."/>
            <person name="Bancroft I."/>
            <person name="Vos P."/>
            <person name="Hoheisel J."/>
            <person name="Zimmermann W."/>
            <person name="Wedler H."/>
            <person name="Ridley P."/>
            <person name="Langham S.-A."/>
            <person name="McCullagh B."/>
            <person name="Bilham L."/>
            <person name="Robben J."/>
            <person name="van der Schueren J."/>
            <person name="Grymonprez B."/>
            <person name="Chuang Y.-J."/>
            <person name="Vandenbussche F."/>
            <person name="Braeken M."/>
            <person name="Weltjens I."/>
            <person name="Voet M."/>
            <person name="Bastiaens I."/>
            <person name="Aert R."/>
            <person name="Defoor E."/>
            <person name="Weitzenegger T."/>
            <person name="Bothe G."/>
            <person name="Ramsperger U."/>
            <person name="Hilbert H."/>
            <person name="Braun M."/>
            <person name="Holzer E."/>
            <person name="Brandt A."/>
            <person name="Peters S."/>
            <person name="van Staveren M."/>
            <person name="Dirkse W."/>
            <person name="Mooijman P."/>
            <person name="Klein Lankhorst R."/>
            <person name="Rose M."/>
            <person name="Hauf J."/>
            <person name="Koetter P."/>
            <person name="Berneiser S."/>
            <person name="Hempel S."/>
            <person name="Feldpausch M."/>
            <person name="Lamberth S."/>
            <person name="Van den Daele H."/>
            <person name="De Keyser A."/>
            <person name="Buysshaert C."/>
            <person name="Gielen J."/>
            <person name="Villarroel R."/>
            <person name="De Clercq R."/>
            <person name="van Montagu M."/>
            <person name="Rogers J."/>
            <person name="Cronin A."/>
            <person name="Quail M.A."/>
            <person name="Bray-Allen S."/>
            <person name="Clark L."/>
            <person name="Doggett J."/>
            <person name="Hall S."/>
            <person name="Kay M."/>
            <person name="Lennard N."/>
            <person name="McLay K."/>
            <person name="Mayes R."/>
            <person name="Pettett A."/>
            <person name="Rajandream M.A."/>
            <person name="Lyne M."/>
            <person name="Benes V."/>
            <person name="Rechmann S."/>
            <person name="Borkova D."/>
            <person name="Bloecker H."/>
            <person name="Scharfe M."/>
            <person name="Grimm M."/>
            <person name="Loehnert T.-H."/>
            <person name="Dose S."/>
            <person name="de Haan M."/>
            <person name="Maarse A.C."/>
            <person name="Schaefer M."/>
            <person name="Mueller-Auer S."/>
            <person name="Gabel C."/>
            <person name="Fuchs M."/>
            <person name="Fartmann B."/>
            <person name="Granderath K."/>
            <person name="Dauner D."/>
            <person name="Herzl A."/>
            <person name="Neumann S."/>
            <person name="Argiriou A."/>
            <person name="Vitale D."/>
            <person name="Liguori R."/>
            <person name="Piravandi E."/>
            <person name="Massenet O."/>
            <person name="Quigley F."/>
            <person name="Clabauld G."/>
            <person name="Muendlein A."/>
            <person name="Felber R."/>
            <person name="Schnabl S."/>
            <person name="Hiller R."/>
            <person name="Schmidt W."/>
            <person name="Lecharny A."/>
            <person name="Aubourg S."/>
            <person name="Chefdor F."/>
            <person name="Cooke R."/>
            <person name="Berger C."/>
            <person name="Monfort A."/>
            <person name="Casacuberta E."/>
            <person name="Gibbons T."/>
            <person name="Weber N."/>
            <person name="Vandenbol M."/>
            <person name="Bargues M."/>
            <person name="Terol J."/>
            <person name="Torres A."/>
            <person name="Perez-Perez A."/>
            <person name="Purnelle B."/>
            <person name="Bent E."/>
            <person name="Johnson S."/>
            <person name="Tacon D."/>
            <person name="Jesse T."/>
            <person name="Heijnen L."/>
            <person name="Schwarz S."/>
            <person name="Scholler P."/>
            <person name="Heber S."/>
            <person name="Francs P."/>
            <person name="Bielke C."/>
            <person name="Frishman D."/>
            <person name="Haase D."/>
            <person name="Lemcke K."/>
            <person name="Mewes H.-W."/>
            <person name="Stocker S."/>
            <person name="Zaccaria P."/>
            <person name="Bevan M."/>
            <person name="Wilson R.K."/>
            <person name="de la Bastide M."/>
            <person name="Habermann K."/>
            <person name="Parnell L."/>
            <person name="Dedhia N."/>
            <person name="Gnoj L."/>
            <person name="Schutz K."/>
            <person name="Huang E."/>
            <person name="Spiegel L."/>
            <person name="Sekhon M."/>
            <person name="Murray J."/>
            <person name="Sheet P."/>
            <person name="Cordes M."/>
            <person name="Abu-Threideh J."/>
            <person name="Stoneking T."/>
            <person name="Kalicki J."/>
            <person name="Graves T."/>
            <person name="Harmon G."/>
            <person name="Edwards J."/>
            <person name="Latreille P."/>
            <person name="Courtney L."/>
            <person name="Cloud J."/>
            <person name="Abbott A."/>
            <person name="Scott K."/>
            <person name="Johnson D."/>
            <person name="Minx P."/>
            <person name="Bentley D."/>
            <person name="Fulton B."/>
            <person name="Miller N."/>
            <person name="Greco T."/>
            <person name="Kemp K."/>
            <person name="Kramer J."/>
            <person name="Fulton L."/>
            <person name="Mardis E."/>
            <person name="Dante M."/>
            <person name="Pepin K."/>
            <person name="Hillier L.W."/>
            <person name="Nelson J."/>
            <person name="Spieth J."/>
            <person name="Ryan E."/>
            <person name="Andrews S."/>
            <person name="Geisel C."/>
            <person name="Layman D."/>
            <person name="Du H."/>
            <person name="Ali J."/>
            <person name="Berghoff A."/>
            <person name="Jones K."/>
            <person name="Drone K."/>
            <person name="Cotton M."/>
            <person name="Joshu C."/>
            <person name="Antonoiu B."/>
            <person name="Zidanic M."/>
            <person name="Strong C."/>
            <person name="Sun H."/>
            <person name="Lamar B."/>
            <person name="Yordan C."/>
            <person name="Ma P."/>
            <person name="Zhong J."/>
            <person name="Preston R."/>
            <person name="Vil D."/>
            <person name="Shekher M."/>
            <person name="Matero A."/>
            <person name="Shah R."/>
            <person name="Swaby I.K."/>
            <person name="O'Shaughnessy A."/>
            <person name="Rodriguez M."/>
            <person name="Hoffman J."/>
            <person name="Till S."/>
            <person name="Granat S."/>
            <person name="Shohdy N."/>
            <person name="Hasegawa A."/>
            <person name="Hameed A."/>
            <person name="Lodhi M."/>
            <person name="Johnson A."/>
            <person name="Chen E."/>
            <person name="Marra M.A."/>
            <person name="Martienssen R."/>
            <person name="McCombie W.R."/>
        </authorList>
    </citation>
    <scope>NUCLEOTIDE SEQUENCE [LARGE SCALE GENOMIC DNA]</scope>
    <source>
        <strain>cv. Columbia</strain>
    </source>
</reference>
<reference key="4">
    <citation type="journal article" date="2017" name="Plant J.">
        <title>Araport11: a complete reannotation of the Arabidopsis thaliana reference genome.</title>
        <authorList>
            <person name="Cheng C.Y."/>
            <person name="Krishnakumar V."/>
            <person name="Chan A.P."/>
            <person name="Thibaud-Nissen F."/>
            <person name="Schobel S."/>
            <person name="Town C.D."/>
        </authorList>
    </citation>
    <scope>GENOME REANNOTATION</scope>
    <source>
        <strain>cv. Columbia</strain>
    </source>
</reference>
<reference key="5">
    <citation type="journal article" date="2003" name="Science">
        <title>Empirical analysis of transcriptional activity in the Arabidopsis genome.</title>
        <authorList>
            <person name="Yamada K."/>
            <person name="Lim J."/>
            <person name="Dale J.M."/>
            <person name="Chen H."/>
            <person name="Shinn P."/>
            <person name="Palm C.J."/>
            <person name="Southwick A.M."/>
            <person name="Wu H.C."/>
            <person name="Kim C.J."/>
            <person name="Nguyen M."/>
            <person name="Pham P.K."/>
            <person name="Cheuk R.F."/>
            <person name="Karlin-Newmann G."/>
            <person name="Liu S.X."/>
            <person name="Lam B."/>
            <person name="Sakano H."/>
            <person name="Wu T."/>
            <person name="Yu G."/>
            <person name="Miranda M."/>
            <person name="Quach H.L."/>
            <person name="Tripp M."/>
            <person name="Chang C.H."/>
            <person name="Lee J.M."/>
            <person name="Toriumi M.J."/>
            <person name="Chan M.M."/>
            <person name="Tang C.C."/>
            <person name="Onodera C.S."/>
            <person name="Deng J.M."/>
            <person name="Akiyama K."/>
            <person name="Ansari Y."/>
            <person name="Arakawa T."/>
            <person name="Banh J."/>
            <person name="Banno F."/>
            <person name="Bowser L."/>
            <person name="Brooks S.Y."/>
            <person name="Carninci P."/>
            <person name="Chao Q."/>
            <person name="Choy N."/>
            <person name="Enju A."/>
            <person name="Goldsmith A.D."/>
            <person name="Gurjal M."/>
            <person name="Hansen N.F."/>
            <person name="Hayashizaki Y."/>
            <person name="Johnson-Hopson C."/>
            <person name="Hsuan V.W."/>
            <person name="Iida K."/>
            <person name="Karnes M."/>
            <person name="Khan S."/>
            <person name="Koesema E."/>
            <person name="Ishida J."/>
            <person name="Jiang P.X."/>
            <person name="Jones T."/>
            <person name="Kawai J."/>
            <person name="Kamiya A."/>
            <person name="Meyers C."/>
            <person name="Nakajima M."/>
            <person name="Narusaka M."/>
            <person name="Seki M."/>
            <person name="Sakurai T."/>
            <person name="Satou M."/>
            <person name="Tamse R."/>
            <person name="Vaysberg M."/>
            <person name="Wallender E.K."/>
            <person name="Wong C."/>
            <person name="Yamamura Y."/>
            <person name="Yuan S."/>
            <person name="Shinozaki K."/>
            <person name="Davis R.W."/>
            <person name="Theologis A."/>
            <person name="Ecker J.R."/>
        </authorList>
    </citation>
    <scope>NUCLEOTIDE SEQUENCE [LARGE SCALE MRNA] (ISOFORM 1)</scope>
    <source>
        <strain>cv. Columbia</strain>
    </source>
</reference>
<reference key="6">
    <citation type="journal article" date="2009" name="Plant Physiol.">
        <title>Large-scale Arabidopsis phosphoproteome profiling reveals novel chloroplast kinase substrates and phosphorylation networks.</title>
        <authorList>
            <person name="Reiland S."/>
            <person name="Messerli G."/>
            <person name="Baerenfaller K."/>
            <person name="Gerrits B."/>
            <person name="Endler A."/>
            <person name="Grossmann J."/>
            <person name="Gruissem W."/>
            <person name="Baginsky S."/>
        </authorList>
    </citation>
    <scope>PHOSPHORYLATION [LARGE SCALE ANALYSIS] AT SER-351</scope>
    <scope>IDENTIFICATION BY MASS SPECTROMETRY [LARGE SCALE ANALYSIS]</scope>
</reference>
<reference key="7">
    <citation type="journal article" date="2012" name="Mol. Cell. Proteomics">
        <title>Comparative large-scale characterisation of plant vs. mammal proteins reveals similar and idiosyncratic N-alpha acetylation features.</title>
        <authorList>
            <person name="Bienvenut W.V."/>
            <person name="Sumpton D."/>
            <person name="Martinez A."/>
            <person name="Lilla S."/>
            <person name="Espagne C."/>
            <person name="Meinnel T."/>
            <person name="Giglione C."/>
        </authorList>
    </citation>
    <scope>ACETYLATION [LARGE SCALE ANALYSIS] AT ALA-2</scope>
    <scope>CLEAVAGE OF INITIATOR METHIONINE [LARGE SCALE ANALYSIS]</scope>
    <scope>IDENTIFICATION BY MASS SPECTROMETRY [LARGE SCALE ANALYSIS]</scope>
</reference>
<reference key="8">
    <citation type="journal article" date="2015" name="Plant Physiol.">
        <title>The Arabidopsis RNA-binding protein AtRGGA regulates tolerance to salt and drought stress.</title>
        <authorList>
            <person name="Ambrosone A."/>
            <person name="Batelli G."/>
            <person name="Nurcato R."/>
            <person name="Aurilia V."/>
            <person name="Punzo P."/>
            <person name="Bangarusamy D.K."/>
            <person name="Ruberti I."/>
            <person name="Sassi M."/>
            <person name="Leone A."/>
            <person name="Costa A."/>
            <person name="Grillo S."/>
        </authorList>
    </citation>
    <scope>FUNCTION</scope>
    <scope>DISRUPTION PHENOTYPE</scope>
    <scope>SUBCELLULAR LOCATION</scope>
    <scope>INDUCTION BY SALT; ABSCISIC ACID AND OSMOTIC STRESS</scope>
    <scope>TISSUE SPECIFICITY</scope>
    <scope>DEVELOPMENTAL STAGE</scope>
    <source>
        <strain>cv. Columbia</strain>
    </source>
</reference>
<feature type="initiator methionine" description="Removed" evidence="16">
    <location>
        <position position="1"/>
    </location>
</feature>
<feature type="chain" id="PRO_0000438316" description="RGG repeats nuclear RNA binding protein A">
    <location>
        <begin position="2"/>
        <end position="355"/>
    </location>
</feature>
<feature type="domain" description="FF" evidence="5">
    <location>
        <begin position="234"/>
        <end position="289"/>
    </location>
</feature>
<feature type="region of interest" description="Disordered" evidence="6">
    <location>
        <begin position="26"/>
        <end position="225"/>
    </location>
</feature>
<feature type="region of interest" description="Disordered" evidence="6">
    <location>
        <begin position="277"/>
        <end position="355"/>
    </location>
</feature>
<feature type="short sequence motif" description="Nuclear localization signal" evidence="4">
    <location>
        <begin position="132"/>
        <end position="139"/>
    </location>
</feature>
<feature type="short sequence motif" description="Arginine-rich RNA-binding motif E-R-P-R-R-X-[F/Y]-[E/D]-R-R-S" evidence="9">
    <location>
        <begin position="145"/>
        <end position="155"/>
    </location>
</feature>
<feature type="compositionally biased region" description="Low complexity" evidence="6">
    <location>
        <begin position="37"/>
        <end position="47"/>
    </location>
</feature>
<feature type="compositionally biased region" description="Gly residues" evidence="6">
    <location>
        <begin position="67"/>
        <end position="81"/>
    </location>
</feature>
<feature type="compositionally biased region" description="Gly residues" evidence="6">
    <location>
        <begin position="114"/>
        <end position="141"/>
    </location>
</feature>
<feature type="compositionally biased region" description="Basic and acidic residues" evidence="6">
    <location>
        <begin position="143"/>
        <end position="168"/>
    </location>
</feature>
<feature type="compositionally biased region" description="Low complexity" evidence="6">
    <location>
        <begin position="177"/>
        <end position="190"/>
    </location>
</feature>
<feature type="compositionally biased region" description="Basic and acidic residues" evidence="6">
    <location>
        <begin position="191"/>
        <end position="202"/>
    </location>
</feature>
<feature type="compositionally biased region" description="Basic and acidic residues" evidence="6">
    <location>
        <begin position="209"/>
        <end position="225"/>
    </location>
</feature>
<feature type="compositionally biased region" description="Basic and acidic residues" evidence="6">
    <location>
        <begin position="277"/>
        <end position="292"/>
    </location>
</feature>
<feature type="compositionally biased region" description="Gly residues" evidence="6">
    <location>
        <begin position="323"/>
        <end position="333"/>
    </location>
</feature>
<feature type="modified residue" description="N-acetylalanine" evidence="16">
    <location>
        <position position="2"/>
    </location>
</feature>
<feature type="modified residue" description="Phosphoserine" evidence="1">
    <location>
        <position position="268"/>
    </location>
</feature>
<feature type="modified residue" description="Phosphoserine" evidence="15">
    <location>
        <position position="351"/>
    </location>
</feature>
<feature type="splice variant" id="VSP_058643" description="In isoform 2.">
    <original>MATLNPFDLLDDDAEDPSQLAVAIEKIDKSKKSGQVSSLPAKSAPKLPSKPLPPAQAVREARSDAPRGGGGRGGFNRGRGGYNRDDGNNGYSGGYTKPSGEGDVSKSSYERRGGGGAPRGSFRGEGGGPGGGRRGGFSNE</original>
    <variation>MLHVVVEAVEDLTVVVVVTTVMMVTMDIQGDTLNPQVKEMFQSLLTRGVA</variation>
    <location>
        <begin position="1"/>
        <end position="140"/>
    </location>
</feature>
<feature type="splice variant" id="VSP_058644" description="In isoform 3.">
    <original>ATLNPFDLLDDDAEDPSQLAVAIEKIDKSKKSGQVSSLPAKSAPKLPSKPLPPAQA</original>
    <variation>MMLRIQASSLLPSRRLISPRNLDRFRACLLSQLLSFHRSHFLLLKP</variation>
    <location>
        <begin position="2"/>
        <end position="57"/>
    </location>
</feature>
<name>RGGA_ARATH</name>
<dbReference type="EMBL" id="AF110227">
    <property type="protein sequence ID" value="AAF14243.1"/>
    <property type="molecule type" value="Genomic_DNA"/>
</dbReference>
<dbReference type="EMBL" id="Z97342">
    <property type="protein sequence ID" value="CAB10456.1"/>
    <property type="molecule type" value="Genomic_DNA"/>
</dbReference>
<dbReference type="EMBL" id="AL161545">
    <property type="protein sequence ID" value="CAB80954.1"/>
    <property type="molecule type" value="Genomic_DNA"/>
</dbReference>
<dbReference type="EMBL" id="CP002687">
    <property type="protein sequence ID" value="AEE83809.1"/>
    <property type="molecule type" value="Genomic_DNA"/>
</dbReference>
<dbReference type="EMBL" id="CP002687">
    <property type="protein sequence ID" value="AEE83810.1"/>
    <property type="molecule type" value="Genomic_DNA"/>
</dbReference>
<dbReference type="EMBL" id="CP002687">
    <property type="protein sequence ID" value="AEE83811.1"/>
    <property type="molecule type" value="Genomic_DNA"/>
</dbReference>
<dbReference type="EMBL" id="AY063896">
    <property type="protein sequence ID" value="AAL36252.1"/>
    <property type="molecule type" value="mRNA"/>
</dbReference>
<dbReference type="EMBL" id="AY096500">
    <property type="protein sequence ID" value="AAM20150.1"/>
    <property type="molecule type" value="mRNA"/>
</dbReference>
<dbReference type="EMBL" id="AY127018">
    <property type="protein sequence ID" value="AAM83242.1"/>
    <property type="molecule type" value="mRNA"/>
</dbReference>
<dbReference type="EMBL" id="BT000559">
    <property type="protein sequence ID" value="AAN18128.1"/>
    <property type="molecule type" value="mRNA"/>
</dbReference>
<dbReference type="PIR" id="F71435">
    <property type="entry name" value="F71435"/>
</dbReference>
<dbReference type="RefSeq" id="NP_001078399.1">
    <molecule id="O23523-2"/>
    <property type="nucleotide sequence ID" value="NM_001084930.1"/>
</dbReference>
<dbReference type="RefSeq" id="NP_001078400.1">
    <molecule id="O23523-3"/>
    <property type="nucleotide sequence ID" value="NM_001084931.1"/>
</dbReference>
<dbReference type="RefSeq" id="NP_193416.1">
    <molecule id="O23523-1"/>
    <property type="nucleotide sequence ID" value="NM_117785.5"/>
</dbReference>
<dbReference type="SMR" id="O23523"/>
<dbReference type="FunCoup" id="O23523">
    <property type="interactions" value="539"/>
</dbReference>
<dbReference type="STRING" id="3702.O23523"/>
<dbReference type="GlyGen" id="O23523">
    <property type="glycosylation" value="1 site"/>
</dbReference>
<dbReference type="iPTMnet" id="O23523"/>
<dbReference type="MetOSite" id="O23523"/>
<dbReference type="PaxDb" id="3702-AT4G16830.1"/>
<dbReference type="ProteomicsDB" id="236886">
    <molecule id="O23523-1"/>
</dbReference>
<dbReference type="EnsemblPlants" id="AT4G16830.1">
    <molecule id="O23523-1"/>
    <property type="protein sequence ID" value="AT4G16830.1"/>
    <property type="gene ID" value="AT4G16830"/>
</dbReference>
<dbReference type="EnsemblPlants" id="AT4G16830.2">
    <molecule id="O23523-2"/>
    <property type="protein sequence ID" value="AT4G16830.2"/>
    <property type="gene ID" value="AT4G16830"/>
</dbReference>
<dbReference type="EnsemblPlants" id="AT4G16830.3">
    <molecule id="O23523-3"/>
    <property type="protein sequence ID" value="AT4G16830.3"/>
    <property type="gene ID" value="AT4G16830"/>
</dbReference>
<dbReference type="GeneID" id="827389"/>
<dbReference type="Gramene" id="AT4G16830.1">
    <molecule id="O23523-1"/>
    <property type="protein sequence ID" value="AT4G16830.1"/>
    <property type="gene ID" value="AT4G16830"/>
</dbReference>
<dbReference type="Gramene" id="AT4G16830.2">
    <molecule id="O23523-2"/>
    <property type="protein sequence ID" value="AT4G16830.2"/>
    <property type="gene ID" value="AT4G16830"/>
</dbReference>
<dbReference type="Gramene" id="AT4G16830.3">
    <molecule id="O23523-3"/>
    <property type="protein sequence ID" value="AT4G16830.3"/>
    <property type="gene ID" value="AT4G16830"/>
</dbReference>
<dbReference type="KEGG" id="ath:AT4G16830"/>
<dbReference type="Araport" id="AT4G16830"/>
<dbReference type="TAIR" id="AT4G16830">
    <property type="gene designation" value="ATRGGA"/>
</dbReference>
<dbReference type="eggNOG" id="KOG2945">
    <property type="taxonomic scope" value="Eukaryota"/>
</dbReference>
<dbReference type="HOGENOM" id="CLU_033492_0_0_1"/>
<dbReference type="InParanoid" id="O23523"/>
<dbReference type="OMA" id="GFRGHRE"/>
<dbReference type="PhylomeDB" id="O23523"/>
<dbReference type="CD-CODE" id="4299E36E">
    <property type="entry name" value="Nucleolus"/>
</dbReference>
<dbReference type="PRO" id="PR:O23523"/>
<dbReference type="Proteomes" id="UP000006548">
    <property type="component" value="Chromosome 4"/>
</dbReference>
<dbReference type="ExpressionAtlas" id="O23523">
    <property type="expression patterns" value="baseline and differential"/>
</dbReference>
<dbReference type="GO" id="GO:0005737">
    <property type="term" value="C:cytoplasm"/>
    <property type="evidence" value="ECO:0000314"/>
    <property type="project" value="TAIR"/>
</dbReference>
<dbReference type="GO" id="GO:0005829">
    <property type="term" value="C:cytosol"/>
    <property type="evidence" value="ECO:0007005"/>
    <property type="project" value="TAIR"/>
</dbReference>
<dbReference type="GO" id="GO:0005634">
    <property type="term" value="C:nucleus"/>
    <property type="evidence" value="ECO:0007005"/>
    <property type="project" value="TAIR"/>
</dbReference>
<dbReference type="GO" id="GO:0048471">
    <property type="term" value="C:perinuclear region of cytoplasm"/>
    <property type="evidence" value="ECO:0000314"/>
    <property type="project" value="TAIR"/>
</dbReference>
<dbReference type="GO" id="GO:0003729">
    <property type="term" value="F:mRNA binding"/>
    <property type="evidence" value="ECO:0000314"/>
    <property type="project" value="TAIR"/>
</dbReference>
<dbReference type="GO" id="GO:0009738">
    <property type="term" value="P:abscisic acid-activated signaling pathway"/>
    <property type="evidence" value="ECO:0007669"/>
    <property type="project" value="UniProtKB-KW"/>
</dbReference>
<dbReference type="GO" id="GO:0071470">
    <property type="term" value="P:cellular response to osmotic stress"/>
    <property type="evidence" value="ECO:0000315"/>
    <property type="project" value="TAIR"/>
</dbReference>
<dbReference type="GO" id="GO:0071472">
    <property type="term" value="P:cellular response to salt stress"/>
    <property type="evidence" value="ECO:0000315"/>
    <property type="project" value="TAIR"/>
</dbReference>
<dbReference type="GO" id="GO:0009787">
    <property type="term" value="P:regulation of abscisic acid-activated signaling pathway"/>
    <property type="evidence" value="ECO:0000315"/>
    <property type="project" value="UniProtKB"/>
</dbReference>
<dbReference type="GO" id="GO:0006417">
    <property type="term" value="P:regulation of translation"/>
    <property type="evidence" value="ECO:0007669"/>
    <property type="project" value="UniProtKB-KW"/>
</dbReference>
<dbReference type="GO" id="GO:0009737">
    <property type="term" value="P:response to abscisic acid"/>
    <property type="evidence" value="ECO:0000270"/>
    <property type="project" value="UniProtKB"/>
</dbReference>
<dbReference type="GO" id="GO:0006970">
    <property type="term" value="P:response to osmotic stress"/>
    <property type="evidence" value="ECO:0000270"/>
    <property type="project" value="UniProtKB"/>
</dbReference>
<dbReference type="GO" id="GO:0009651">
    <property type="term" value="P:response to salt stress"/>
    <property type="evidence" value="ECO:0000270"/>
    <property type="project" value="UniProtKB"/>
</dbReference>
<dbReference type="Gene3D" id="6.10.140.1040">
    <property type="match status" value="1"/>
</dbReference>
<dbReference type="InterPro" id="IPR039764">
    <property type="entry name" value="HABP4/SERBP1-like"/>
</dbReference>
<dbReference type="InterPro" id="IPR006861">
    <property type="entry name" value="HABP4_PAIRBP1-bd"/>
</dbReference>
<dbReference type="InterPro" id="IPR019084">
    <property type="entry name" value="STM1-like_N"/>
</dbReference>
<dbReference type="PANTHER" id="PTHR12299">
    <property type="entry name" value="HYALURONIC ACID-BINDING PROTEIN 4"/>
    <property type="match status" value="1"/>
</dbReference>
<dbReference type="PANTHER" id="PTHR12299:SF73">
    <property type="entry name" value="RGG REPEATS NUCLEAR RNA BINDING PROTEIN A"/>
    <property type="match status" value="1"/>
</dbReference>
<dbReference type="Pfam" id="PF04774">
    <property type="entry name" value="HABP4_PAI-RBP1"/>
    <property type="match status" value="1"/>
</dbReference>
<dbReference type="Pfam" id="PF09598">
    <property type="entry name" value="Stm1_N"/>
    <property type="match status" value="1"/>
</dbReference>
<dbReference type="SMART" id="SM01233">
    <property type="entry name" value="HABP4_PAI-RBP1"/>
    <property type="match status" value="1"/>
</dbReference>
<keyword id="KW-0938">Abscisic acid signaling pathway</keyword>
<keyword id="KW-0007">Acetylation</keyword>
<keyword id="KW-0025">Alternative splicing</keyword>
<keyword id="KW-0963">Cytoplasm</keyword>
<keyword id="KW-0539">Nucleus</keyword>
<keyword id="KW-0597">Phosphoprotein</keyword>
<keyword id="KW-1185">Reference proteome</keyword>
<keyword id="KW-0694">RNA-binding</keyword>
<keyword id="KW-0810">Translation regulation</keyword>
<protein>
    <recommendedName>
        <fullName evidence="9">RGG repeats nuclear RNA binding protein A</fullName>
        <shortName evidence="10">AtRGGA</shortName>
    </recommendedName>
</protein>
<gene>
    <name evidence="9" type="primary">RGGA</name>
    <name evidence="12" type="ordered locus">At4g16830</name>
    <name evidence="13" type="ORF">dl4440w</name>
    <name evidence="14" type="ORF">FCAALL.13</name>
</gene>
<organism>
    <name type="scientific">Arabidopsis thaliana</name>
    <name type="common">Mouse-ear cress</name>
    <dbReference type="NCBI Taxonomy" id="3702"/>
    <lineage>
        <taxon>Eukaryota</taxon>
        <taxon>Viridiplantae</taxon>
        <taxon>Streptophyta</taxon>
        <taxon>Embryophyta</taxon>
        <taxon>Tracheophyta</taxon>
        <taxon>Spermatophyta</taxon>
        <taxon>Magnoliopsida</taxon>
        <taxon>eudicotyledons</taxon>
        <taxon>Gunneridae</taxon>
        <taxon>Pentapetalae</taxon>
        <taxon>rosids</taxon>
        <taxon>malvids</taxon>
        <taxon>Brassicales</taxon>
        <taxon>Brassicaceae</taxon>
        <taxon>Camelineae</taxon>
        <taxon>Arabidopsis</taxon>
    </lineage>
</organism>
<sequence>MATLNPFDLLDDDAEDPSQLAVAIEKIDKSKKSGQVSSLPAKSAPKLPSKPLPPAQAVREARSDAPRGGGGRGGFNRGRGGYNRDDGNNGYSGGYTKPSGEGDVSKSSYERRGGGGAPRGSFRGEGGGPGGGRRGGFSNEGGDGERPRRAFERRSGTGRGSDFKRDGSGRGNWGTPGEEIAAETEAVAGVETEKDVGEKPAVDDVAADANKEDTVVEEKEPEDKEMTLDEYEKILEEKKKALQSLTTSERKVDTKVFESMQQLSNKKSNDEIFIKLGSDKDKRKDDKEEKAKKAVSINEFLKPAEGGNYYRGGRGGRGRGGRGRGGVSSGESGGYRNEAAPAIGDAAQFPSLGGK</sequence>
<accession>O23523</accession>
<accession>A8MQG3</accession>
<accession>A8MQJ5</accession>
<proteinExistence type="evidence at protein level"/>
<evidence type="ECO:0000250" key="1">
    <source>
        <dbReference type="UniProtKB" id="O23593"/>
    </source>
</evidence>
<evidence type="ECO:0000250" key="2">
    <source>
        <dbReference type="UniProtKB" id="Q5XJA5"/>
    </source>
</evidence>
<evidence type="ECO:0000250" key="3">
    <source>
        <dbReference type="UniProtKB" id="Q9SQ56"/>
    </source>
</evidence>
<evidence type="ECO:0000255" key="4">
    <source>
        <dbReference type="PROSITE-ProRule" id="PRU00768"/>
    </source>
</evidence>
<evidence type="ECO:0000255" key="5">
    <source>
        <dbReference type="PROSITE-ProRule" id="PRU01013"/>
    </source>
</evidence>
<evidence type="ECO:0000256" key="6">
    <source>
        <dbReference type="SAM" id="MobiDB-lite"/>
    </source>
</evidence>
<evidence type="ECO:0000269" key="7">
    <source>
    </source>
</evidence>
<evidence type="ECO:0000269" key="8">
    <source>
    </source>
</evidence>
<evidence type="ECO:0000303" key="9">
    <source>
    </source>
</evidence>
<evidence type="ECO:0000303" key="10">
    <source>
    </source>
</evidence>
<evidence type="ECO:0000305" key="11"/>
<evidence type="ECO:0000312" key="12">
    <source>
        <dbReference type="Araport" id="AT4G16830"/>
    </source>
</evidence>
<evidence type="ECO:0000312" key="13">
    <source>
        <dbReference type="EMBL" id="CAB10456.1"/>
    </source>
</evidence>
<evidence type="ECO:0000312" key="14">
    <source>
        <dbReference type="EMBL" id="CAB80954.1"/>
    </source>
</evidence>
<evidence type="ECO:0007744" key="15">
    <source>
    </source>
</evidence>
<evidence type="ECO:0007744" key="16">
    <source>
    </source>
</evidence>
<comment type="function">
    <text evidence="2 8">Ribosome-binding protein that acts as a regulator of mRNA translation by promoting ribosome inactivation (By similarity). Binds RNA (PubMed:25783413). Regulates responses to abscisic acid (ABA) (PubMed:25783413). Promotes stomata closure in drought conditions (PubMed:25783413). Involved in resistance to salt and drought stresses via the accumulation of Pro (PubMed:25783413).</text>
</comment>
<comment type="subcellular location">
    <subcellularLocation>
        <location evidence="8">Cytoplasm</location>
        <location evidence="8">Perinuclear region</location>
    </subcellularLocation>
    <subcellularLocation>
        <location evidence="3 4">Nucleus</location>
    </subcellularLocation>
</comment>
<comment type="alternative products">
    <event type="alternative splicing"/>
    <isoform>
        <id>O23523-1</id>
        <name>1</name>
        <sequence type="displayed"/>
    </isoform>
    <isoform>
        <id>O23523-2</id>
        <name>2</name>
        <sequence type="described" ref="VSP_058643"/>
    </isoform>
    <isoform>
        <id>O23523-3</id>
        <name>3</name>
        <sequence type="described" ref="VSP_058644"/>
    </isoform>
</comment>
<comment type="tissue specificity">
    <text evidence="7 8">Expressed in seedlings, leaves, roots, inflorescences, and siliques (PubMed:25783413). Constitutively expressed in seedlings and roots (PubMed:11905967).</text>
</comment>
<comment type="developmental stage">
    <text evidence="8">In leaves, especially present in stomata guard cells. In reproductive organs, expressed in pollen grains and tubes of germinating pollen, as well as in funiculi attaching seeds to siliques.</text>
</comment>
<comment type="induction">
    <text evidence="8">By abscisic acid (ABA), and osmotic stress (e.g. polyethylene glycol PEG). Slight transient repression by salt (NaCl).</text>
</comment>
<comment type="disruption phenotype">
    <text evidence="8">Larger rosettes and delayed flowering in long days (16 hours of light / 8 hours of darkness). Higher sensitivity to salt (NaCl). Hypersensitivity to the presence of abscisic acid (ABA).</text>
</comment>
<comment type="similarity">
    <text evidence="11">Belongs to the SERBP1-HABP4 family.</text>
</comment>